<name>HD3B_ORYSJ</name>
<protein>
    <recommendedName>
        <fullName>Protein HEADING DATE 3B</fullName>
    </recommendedName>
    <alternativeName>
        <fullName evidence="9">ELF3-like protein 1</fullName>
        <shortName evidence="9">OsELF3-1</shortName>
    </alternativeName>
    <alternativeName>
        <fullName evidence="10">OsELF3</fullName>
    </alternativeName>
    <alternativeName>
        <fullName evidence="8">Protein HEADING DATE 17</fullName>
    </alternativeName>
</protein>
<comment type="function">
    <text evidence="4 5 6 7">Involved in the regulation of flowering time under short day (SD) and long day (LD) conditions. Functions as a floral promoter by negatively regulating GHD7, a repressor of the photoperiodic control of flowering (PubMed:22399582, PubMed:22422935, PubMed:22912900). Acts as a floral activator in the LD photoperiodic pathway (PubMed:22888152). Involved in blue light-induced activation of EHD1 expression to promote flowering under SD conditions (PubMed:22912900).</text>
</comment>
<comment type="subcellular location">
    <subcellularLocation>
        <location evidence="6">Nucleus</location>
    </subcellularLocation>
</comment>
<comment type="tissue specificity">
    <text evidence="5">Expressed in mesophyll cells of young leaves, anthers, stigmas and the top of lemmas.</text>
</comment>
<comment type="induction">
    <text evidence="5">Circadian-regulation under short day (SD) conditions. Expression increases after midnight, peaks just at dawn and gradually decreases during the daytime.</text>
</comment>
<comment type="disruption phenotype">
    <text evidence="3 5 7">Late flowering phenotype under short day (SD) and long day (LD) conditions.</text>
</comment>
<comment type="sequence caution" evidence="11">
    <conflict type="erroneous gene model prediction">
        <sequence resource="EMBL-CDS" id="BAF18684"/>
    </conflict>
</comment>
<reference key="1">
    <citation type="journal article" date="2012" name="Plant Cell Physiol.">
        <title>Natural variation in Hd17, a homolog of Arabidopsis ELF3 that is involved in rice photoperiodic flowering.</title>
        <authorList>
            <person name="Matsubara K."/>
            <person name="Ogiso-Tanaka E."/>
            <person name="Hori K."/>
            <person name="Ebana K."/>
            <person name="Ando T."/>
            <person name="Yano M."/>
        </authorList>
    </citation>
    <scope>NUCLEOTIDE SEQUENCE [GENOMIC DNA]</scope>
    <scope>FUNCTION</scope>
    <source>
        <strain>cv. Nipponbare</strain>
    </source>
</reference>
<reference key="2">
    <citation type="submission" date="2012-11" db="EMBL/GenBank/DDBJ databases">
        <authorList>
            <person name="Zhao D."/>
            <person name="Liu Q."/>
        </authorList>
    </citation>
    <scope>NUCLEOTIDE SEQUENCE [GENOMIC DNA]</scope>
    <source>
        <strain>cv. Wuyunjing 8</strain>
    </source>
</reference>
<reference key="3">
    <citation type="journal article" date="2005" name="Nature">
        <title>The map-based sequence of the rice genome.</title>
        <authorList>
            <consortium name="International rice genome sequencing project (IRGSP)"/>
        </authorList>
    </citation>
    <scope>NUCLEOTIDE SEQUENCE [LARGE SCALE GENOMIC DNA]</scope>
    <source>
        <strain>cv. Nipponbare</strain>
    </source>
</reference>
<reference key="4">
    <citation type="journal article" date="2008" name="Nucleic Acids Res.">
        <title>The rice annotation project database (RAP-DB): 2008 update.</title>
        <authorList>
            <consortium name="The rice annotation project (RAP)"/>
        </authorList>
    </citation>
    <scope>GENOME REANNOTATION</scope>
    <source>
        <strain>cv. Nipponbare</strain>
    </source>
</reference>
<reference key="5">
    <citation type="journal article" date="2013" name="Rice">
        <title>Improvement of the Oryza sativa Nipponbare reference genome using next generation sequence and optical map data.</title>
        <authorList>
            <person name="Kawahara Y."/>
            <person name="de la Bastide M."/>
            <person name="Hamilton J.P."/>
            <person name="Kanamori H."/>
            <person name="McCombie W.R."/>
            <person name="Ouyang S."/>
            <person name="Schwartz D.C."/>
            <person name="Tanaka T."/>
            <person name="Wu J."/>
            <person name="Zhou S."/>
            <person name="Childs K.L."/>
            <person name="Davidson R.M."/>
            <person name="Lin H."/>
            <person name="Quesada-Ocampo L."/>
            <person name="Vaillancourt B."/>
            <person name="Sakai H."/>
            <person name="Lee S.S."/>
            <person name="Kim J."/>
            <person name="Numa H."/>
            <person name="Itoh T."/>
            <person name="Buell C.R."/>
            <person name="Matsumoto T."/>
        </authorList>
    </citation>
    <scope>GENOME REANNOTATION</scope>
    <source>
        <strain>cv. Nipponbare</strain>
    </source>
</reference>
<reference key="6">
    <citation type="journal article" date="2005" name="PLoS Biol.">
        <title>The genomes of Oryza sativa: a history of duplications.</title>
        <authorList>
            <person name="Yu J."/>
            <person name="Wang J."/>
            <person name="Lin W."/>
            <person name="Li S."/>
            <person name="Li H."/>
            <person name="Zhou J."/>
            <person name="Ni P."/>
            <person name="Dong W."/>
            <person name="Hu S."/>
            <person name="Zeng C."/>
            <person name="Zhang J."/>
            <person name="Zhang Y."/>
            <person name="Li R."/>
            <person name="Xu Z."/>
            <person name="Li S."/>
            <person name="Li X."/>
            <person name="Zheng H."/>
            <person name="Cong L."/>
            <person name="Lin L."/>
            <person name="Yin J."/>
            <person name="Geng J."/>
            <person name="Li G."/>
            <person name="Shi J."/>
            <person name="Liu J."/>
            <person name="Lv H."/>
            <person name="Li J."/>
            <person name="Wang J."/>
            <person name="Deng Y."/>
            <person name="Ran L."/>
            <person name="Shi X."/>
            <person name="Wang X."/>
            <person name="Wu Q."/>
            <person name="Li C."/>
            <person name="Ren X."/>
            <person name="Wang J."/>
            <person name="Wang X."/>
            <person name="Li D."/>
            <person name="Liu D."/>
            <person name="Zhang X."/>
            <person name="Ji Z."/>
            <person name="Zhao W."/>
            <person name="Sun Y."/>
            <person name="Zhang Z."/>
            <person name="Bao J."/>
            <person name="Han Y."/>
            <person name="Dong L."/>
            <person name="Ji J."/>
            <person name="Chen P."/>
            <person name="Wu S."/>
            <person name="Liu J."/>
            <person name="Xiao Y."/>
            <person name="Bu D."/>
            <person name="Tan J."/>
            <person name="Yang L."/>
            <person name="Ye C."/>
            <person name="Zhang J."/>
            <person name="Xu J."/>
            <person name="Zhou Y."/>
            <person name="Yu Y."/>
            <person name="Zhang B."/>
            <person name="Zhuang S."/>
            <person name="Wei H."/>
            <person name="Liu B."/>
            <person name="Lei M."/>
            <person name="Yu H."/>
            <person name="Li Y."/>
            <person name="Xu H."/>
            <person name="Wei S."/>
            <person name="He X."/>
            <person name="Fang L."/>
            <person name="Zhang Z."/>
            <person name="Zhang Y."/>
            <person name="Huang X."/>
            <person name="Su Z."/>
            <person name="Tong W."/>
            <person name="Li J."/>
            <person name="Tong Z."/>
            <person name="Li S."/>
            <person name="Ye J."/>
            <person name="Wang L."/>
            <person name="Fang L."/>
            <person name="Lei T."/>
            <person name="Chen C.-S."/>
            <person name="Chen H.-C."/>
            <person name="Xu Z."/>
            <person name="Li H."/>
            <person name="Huang H."/>
            <person name="Zhang F."/>
            <person name="Xu H."/>
            <person name="Li N."/>
            <person name="Zhao C."/>
            <person name="Li S."/>
            <person name="Dong L."/>
            <person name="Huang Y."/>
            <person name="Li L."/>
            <person name="Xi Y."/>
            <person name="Qi Q."/>
            <person name="Li W."/>
            <person name="Zhang B."/>
            <person name="Hu W."/>
            <person name="Zhang Y."/>
            <person name="Tian X."/>
            <person name="Jiao Y."/>
            <person name="Liang X."/>
            <person name="Jin J."/>
            <person name="Gao L."/>
            <person name="Zheng W."/>
            <person name="Hao B."/>
            <person name="Liu S.-M."/>
            <person name="Wang W."/>
            <person name="Yuan L."/>
            <person name="Cao M."/>
            <person name="McDermott J."/>
            <person name="Samudrala R."/>
            <person name="Wang J."/>
            <person name="Wong G.K.-S."/>
            <person name="Yang H."/>
        </authorList>
    </citation>
    <scope>NUCLEOTIDE SEQUENCE [LARGE SCALE GENOMIC DNA]</scope>
    <source>
        <strain>cv. Nipponbare</strain>
    </source>
</reference>
<reference key="7">
    <citation type="journal article" date="2009" name="Theor. Appl. Genet.">
        <title>Identification of a novel gene ef7 conferring an extremely long basic vegetative growth phase in rice.</title>
        <authorList>
            <person name="Yuan Q."/>
            <person name="Saito H."/>
            <person name="Okumoto Y."/>
            <person name="Inoue H."/>
            <person name="Nishida H."/>
            <person name="Tsukiyama T."/>
            <person name="Teraishi M."/>
            <person name="Tanisaka T."/>
        </authorList>
    </citation>
    <scope>DISRUPTION PHENOTYPE</scope>
    <source>
        <strain>cv. Gimbozu</strain>
    </source>
</reference>
<reference key="8">
    <citation type="journal article" date="2012" name="Plant Cell Physiol.">
        <title>Ef7 encodes an ELF3-like protein and promotes rice flowering by negatively regulating the floral repressor gene Ghd7 under both short- and long-day conditions.</title>
        <authorList>
            <person name="Saito H."/>
            <person name="Ogiso-Tanaka E."/>
            <person name="Okumoto Y."/>
            <person name="Yoshitake Y."/>
            <person name="Izumi H."/>
            <person name="Yokoo T."/>
            <person name="Matsubara K."/>
            <person name="Hori K."/>
            <person name="Yano M."/>
            <person name="Inoue H."/>
            <person name="Tanisaka T."/>
        </authorList>
    </citation>
    <scope>FUNCTION</scope>
    <scope>TISSUE SPECIFICITY</scope>
    <scope>INDUCTION</scope>
    <scope>DISRUPTION PHENOTYPE</scope>
    <source>
        <strain>cv. Gimbozu</strain>
    </source>
</reference>
<reference key="9">
    <citation type="journal article" date="2012" name="PLoS ONE">
        <title>OsELF3-1, an ortholog of Arabidopsis early flowering 3, regulates rice circadian rhythm and photoperiodic flowering.</title>
        <authorList>
            <person name="Zhao J."/>
            <person name="Huang X."/>
            <person name="Ouyang X."/>
            <person name="Chen W."/>
            <person name="Du A."/>
            <person name="Zhu L."/>
            <person name="Wang S."/>
            <person name="Deng X.W."/>
            <person name="Li S."/>
        </authorList>
    </citation>
    <scope>FUNCTION</scope>
    <scope>DISRUPTION PHENOTYPE</scope>
</reference>
<reference key="10">
    <citation type="journal article" date="2013" name="Mol. Plant">
        <title>OsELF3 is involved in circadian clock regulation for promoting flowering under long-day conditions in rice.</title>
        <authorList>
            <person name="Yang Y."/>
            <person name="Peng Q."/>
            <person name="Chen G.X."/>
            <person name="Li X.H."/>
            <person name="Wu C.Y."/>
        </authorList>
    </citation>
    <scope>FUNCTION</scope>
    <scope>SUBCELLULAR LOCATION</scope>
</reference>
<accession>Q9SNQ6</accession>
<accession>Q0DEN9</accession>
<dbReference type="EMBL" id="AB683966">
    <property type="protein sequence ID" value="BAL63007.1"/>
    <property type="molecule type" value="Genomic_DNA"/>
</dbReference>
<dbReference type="EMBL" id="KC204686">
    <property type="protein sequence ID" value="AGW16338.1"/>
    <property type="molecule type" value="Genomic_DNA"/>
</dbReference>
<dbReference type="EMBL" id="AP000399">
    <property type="protein sequence ID" value="BAA83571.1"/>
    <property type="molecule type" value="Genomic_DNA"/>
</dbReference>
<dbReference type="EMBL" id="AP008212">
    <property type="protein sequence ID" value="BAF18684.2"/>
    <property type="status" value="ALT_SEQ"/>
    <property type="molecule type" value="Genomic_DNA"/>
</dbReference>
<dbReference type="EMBL" id="AP014962">
    <property type="protein sequence ID" value="BAS96101.1"/>
    <property type="molecule type" value="Genomic_DNA"/>
</dbReference>
<dbReference type="EMBL" id="CM000143">
    <property type="protein sequence ID" value="EAZ35794.1"/>
    <property type="molecule type" value="Genomic_DNA"/>
</dbReference>
<dbReference type="RefSeq" id="XP_015642489.1">
    <property type="nucleotide sequence ID" value="XM_015787003.1"/>
</dbReference>
<dbReference type="FunCoup" id="Q9SNQ6">
    <property type="interactions" value="1135"/>
</dbReference>
<dbReference type="STRING" id="39947.Q9SNQ6"/>
<dbReference type="PaxDb" id="39947-Q9SNQ6"/>
<dbReference type="EnsemblPlants" id="Os06t0142600-01">
    <property type="protein sequence ID" value="Os06t0142600-01"/>
    <property type="gene ID" value="Os06g0142600"/>
</dbReference>
<dbReference type="Gramene" id="Os06t0142600-01">
    <property type="protein sequence ID" value="Os06t0142600-01"/>
    <property type="gene ID" value="Os06g0142600"/>
</dbReference>
<dbReference type="KEGG" id="dosa:Os06g0142600"/>
<dbReference type="eggNOG" id="ENOG502QSB6">
    <property type="taxonomic scope" value="Eukaryota"/>
</dbReference>
<dbReference type="HOGENOM" id="CLU_027835_2_0_1"/>
<dbReference type="InParanoid" id="Q9SNQ6"/>
<dbReference type="OrthoDB" id="1939092at2759"/>
<dbReference type="PlantReactome" id="R-OSA-8933811">
    <property type="pathway name" value="Circadian rhythm"/>
</dbReference>
<dbReference type="Proteomes" id="UP000000763">
    <property type="component" value="Chromosome 6"/>
</dbReference>
<dbReference type="Proteomes" id="UP000007752">
    <property type="component" value="Chromosome 6"/>
</dbReference>
<dbReference type="Proteomes" id="UP000059680">
    <property type="component" value="Chromosome 6"/>
</dbReference>
<dbReference type="GO" id="GO:0005634">
    <property type="term" value="C:nucleus"/>
    <property type="evidence" value="ECO:0000314"/>
    <property type="project" value="UniProtKB"/>
</dbReference>
<dbReference type="GO" id="GO:0009908">
    <property type="term" value="P:flower development"/>
    <property type="evidence" value="ECO:0007669"/>
    <property type="project" value="UniProtKB-KW"/>
</dbReference>
<dbReference type="GO" id="GO:0048578">
    <property type="term" value="P:positive regulation of long-day photoperiodism, flowering"/>
    <property type="evidence" value="ECO:0000315"/>
    <property type="project" value="UniProtKB"/>
</dbReference>
<dbReference type="GO" id="GO:0048576">
    <property type="term" value="P:positive regulation of short-day photoperiodism, flowering"/>
    <property type="evidence" value="ECO:0000315"/>
    <property type="project" value="UniProtKB"/>
</dbReference>
<dbReference type="InterPro" id="IPR039319">
    <property type="entry name" value="ELF3-like"/>
</dbReference>
<dbReference type="PANTHER" id="PTHR34281">
    <property type="entry name" value="PROTEIN EARLY FLOWERING 3"/>
    <property type="match status" value="1"/>
</dbReference>
<dbReference type="PANTHER" id="PTHR34281:SF2">
    <property type="entry name" value="PROTEIN EARLY FLOWERING 3"/>
    <property type="match status" value="1"/>
</dbReference>
<proteinExistence type="evidence at transcript level"/>
<keyword id="KW-0287">Flowering</keyword>
<keyword id="KW-0539">Nucleus</keyword>
<keyword id="KW-1185">Reference proteome</keyword>
<keyword id="KW-0804">Transcription</keyword>
<keyword id="KW-0805">Transcription regulation</keyword>
<gene>
    <name type="primary">HD3B</name>
    <name evidence="9" type="synonym">EF7</name>
    <name evidence="9" type="synonym">ELF3-1</name>
    <name evidence="8" type="synonym">HD17</name>
    <name evidence="13" type="ordered locus">Os06g0142600</name>
    <name evidence="11" type="ordered locus">LOC_Os06g05060</name>
    <name evidence="14" type="ORF">OsJ_20086</name>
    <name evidence="12" type="ORF">P0535G04.25</name>
</gene>
<organism>
    <name type="scientific">Oryza sativa subsp. japonica</name>
    <name type="common">Rice</name>
    <dbReference type="NCBI Taxonomy" id="39947"/>
    <lineage>
        <taxon>Eukaryota</taxon>
        <taxon>Viridiplantae</taxon>
        <taxon>Streptophyta</taxon>
        <taxon>Embryophyta</taxon>
        <taxon>Tracheophyta</taxon>
        <taxon>Spermatophyta</taxon>
        <taxon>Magnoliopsida</taxon>
        <taxon>Liliopsida</taxon>
        <taxon>Poales</taxon>
        <taxon>Poaceae</taxon>
        <taxon>BOP clade</taxon>
        <taxon>Oryzoideae</taxon>
        <taxon>Oryzeae</taxon>
        <taxon>Oryzinae</taxon>
        <taxon>Oryza</taxon>
        <taxon>Oryza sativa</taxon>
    </lineage>
</organism>
<sequence>MATRGGGGGGGGKEAKGKVMGPLFPRLHVNDAAKGGGPRAPPRNKMALYEQFTVPSHRFSGGGGGGGVGGSPAHSTSAASQSQSQSQVYGRDSSLFQPFNVPSNRPGHSTEKINSDKINKKISGSRKELGMLSSQTKGMDIYASRSTAEAPQRRAENTIKSSSGKRLADDDEFMVPSVFNSRFPQYSTQENAGVQDQSTPLVAANPHKSPSTVSKSSTKCYNTVSKKLERIHVSDVKSRTPLKDKEMEAAQTSKNVEVEKSSSFHASKDMFESRHAKVYPKMDKTGIINDSDEPHGGNSGHQATSRNGGSMKFQNPPMRRNEISSNPSSENTDRHYNLPQGGIEETGTKRKRLLEQHDAEKSDDVSRLLEQHDAENIDDVSDSSVECITGWEISPDKIVGAIGTKHFWKARRAIMNQQRVFAVQVFELHKLVKVQKLIAASPHVLIESDPCLGNALLGSKNKLVEENLKAQPLLVATIDDVEPSLQQPEVSKENTEDSPPSPHDTGLGSGQRDQAATNGVSKSNRRATPVASDNKQNNWGVQLQPPQNQWLVPVMSPLEGLVYKPYSGPCPPAGSILAPFYANCTPLSLPSTAGDFMNSAYGVPMPHQPQHMGAPGPPSMPMNYFPPFSIPVMNPTAPAPVVEQGRHPSMPQPYGNFEQQSWISCNMSHPSGIWRFHASRDSEAQASSASSPFDRFQCSGSGPVSAFPTVSAQNNQPQPSYSSRDNQTNVIKVVPHNSRTASESAARIFRSIQMERQRDD</sequence>
<evidence type="ECO:0000255" key="1"/>
<evidence type="ECO:0000256" key="2">
    <source>
        <dbReference type="SAM" id="MobiDB-lite"/>
    </source>
</evidence>
<evidence type="ECO:0000269" key="3">
    <source>
    </source>
</evidence>
<evidence type="ECO:0000269" key="4">
    <source>
    </source>
</evidence>
<evidence type="ECO:0000269" key="5">
    <source>
    </source>
</evidence>
<evidence type="ECO:0000269" key="6">
    <source>
    </source>
</evidence>
<evidence type="ECO:0000269" key="7">
    <source>
    </source>
</evidence>
<evidence type="ECO:0000303" key="8">
    <source>
    </source>
</evidence>
<evidence type="ECO:0000303" key="9">
    <source>
    </source>
</evidence>
<evidence type="ECO:0000303" key="10">
    <source>
    </source>
</evidence>
<evidence type="ECO:0000305" key="11"/>
<evidence type="ECO:0000312" key="12">
    <source>
        <dbReference type="EMBL" id="BAA83571.1"/>
    </source>
</evidence>
<evidence type="ECO:0000312" key="13">
    <source>
        <dbReference type="EMBL" id="BAS96101.1"/>
    </source>
</evidence>
<evidence type="ECO:0000312" key="14">
    <source>
        <dbReference type="EMBL" id="EAZ35794.1"/>
    </source>
</evidence>
<feature type="chain" id="PRO_0000437428" description="Protein HEADING DATE 3B">
    <location>
        <begin position="1"/>
        <end position="760"/>
    </location>
</feature>
<feature type="region of interest" description="Disordered" evidence="2">
    <location>
        <begin position="1"/>
        <end position="120"/>
    </location>
</feature>
<feature type="region of interest" description="Disordered" evidence="2">
    <location>
        <begin position="144"/>
        <end position="169"/>
    </location>
</feature>
<feature type="region of interest" description="Disordered" evidence="2">
    <location>
        <begin position="236"/>
        <end position="262"/>
    </location>
</feature>
<feature type="region of interest" description="Disordered" evidence="2">
    <location>
        <begin position="285"/>
        <end position="346"/>
    </location>
</feature>
<feature type="region of interest" description="Disordered" evidence="2">
    <location>
        <begin position="485"/>
        <end position="543"/>
    </location>
</feature>
<feature type="region of interest" description="Disordered" evidence="2">
    <location>
        <begin position="707"/>
        <end position="760"/>
    </location>
</feature>
<feature type="short sequence motif" description="Nuclear localization signal" evidence="1">
    <location>
        <begin position="349"/>
        <end position="355"/>
    </location>
</feature>
<feature type="compositionally biased region" description="Gly residues" evidence="2">
    <location>
        <begin position="1"/>
        <end position="12"/>
    </location>
</feature>
<feature type="compositionally biased region" description="Gly residues" evidence="2">
    <location>
        <begin position="60"/>
        <end position="70"/>
    </location>
</feature>
<feature type="compositionally biased region" description="Low complexity" evidence="2">
    <location>
        <begin position="71"/>
        <end position="87"/>
    </location>
</feature>
<feature type="compositionally biased region" description="Polar residues" evidence="2">
    <location>
        <begin position="94"/>
        <end position="107"/>
    </location>
</feature>
<feature type="compositionally biased region" description="Basic and acidic residues" evidence="2">
    <location>
        <begin position="108"/>
        <end position="120"/>
    </location>
</feature>
<feature type="compositionally biased region" description="Basic and acidic residues" evidence="2">
    <location>
        <begin position="236"/>
        <end position="248"/>
    </location>
</feature>
<feature type="compositionally biased region" description="Polar residues" evidence="2">
    <location>
        <begin position="511"/>
        <end position="522"/>
    </location>
</feature>
<feature type="compositionally biased region" description="Polar residues" evidence="2">
    <location>
        <begin position="531"/>
        <end position="543"/>
    </location>
</feature>
<feature type="compositionally biased region" description="Polar residues" evidence="2">
    <location>
        <begin position="707"/>
        <end position="730"/>
    </location>
</feature>